<reference key="1">
    <citation type="journal article" date="2005" name="Nat. Biotechnol.">
        <title>The genome sequence of the ethanologenic bacterium Zymomonas mobilis ZM4.</title>
        <authorList>
            <person name="Seo J.-S."/>
            <person name="Chong H."/>
            <person name="Park H.S."/>
            <person name="Yoon K.-O."/>
            <person name="Jung C."/>
            <person name="Kim J.J."/>
            <person name="Hong J.H."/>
            <person name="Kim H."/>
            <person name="Kim J.-H."/>
            <person name="Kil J.-I."/>
            <person name="Park C.J."/>
            <person name="Oh H.-M."/>
            <person name="Lee J.-S."/>
            <person name="Jin S.-J."/>
            <person name="Um H.-W."/>
            <person name="Lee H.-J."/>
            <person name="Oh S.-J."/>
            <person name="Kim J.Y."/>
            <person name="Kang H.L."/>
            <person name="Lee S.Y."/>
            <person name="Lee K.J."/>
            <person name="Kang H.S."/>
        </authorList>
    </citation>
    <scope>NUCLEOTIDE SEQUENCE [LARGE SCALE GENOMIC DNA]</scope>
    <source>
        <strain>ATCC 31821 / ZM4 / CP4</strain>
    </source>
</reference>
<protein>
    <recommendedName>
        <fullName evidence="1">Aspartyl/glutamyl-tRNA(Asn/Gln) amidotransferase subunit B</fullName>
        <shortName evidence="1">Asp/Glu-ADT subunit B</shortName>
        <ecNumber evidence="1">6.3.5.-</ecNumber>
    </recommendedName>
</protein>
<organism>
    <name type="scientific">Zymomonas mobilis subsp. mobilis (strain ATCC 31821 / ZM4 / CP4)</name>
    <dbReference type="NCBI Taxonomy" id="264203"/>
    <lineage>
        <taxon>Bacteria</taxon>
        <taxon>Pseudomonadati</taxon>
        <taxon>Pseudomonadota</taxon>
        <taxon>Alphaproteobacteria</taxon>
        <taxon>Sphingomonadales</taxon>
        <taxon>Zymomonadaceae</taxon>
        <taxon>Zymomonas</taxon>
    </lineage>
</organism>
<evidence type="ECO:0000255" key="1">
    <source>
        <dbReference type="HAMAP-Rule" id="MF_00121"/>
    </source>
</evidence>
<evidence type="ECO:0000305" key="2"/>
<proteinExistence type="inferred from homology"/>
<accession>Q5NPF4</accession>
<name>GATB_ZYMMO</name>
<sequence length="490" mass="54110">MEKYILEGATGSWEIVVGLEVHAQVISKSKLFSGAATAFGAEPNSQVSLIDAAMPGMLPVVNRECIRQAVRTGLAIGAVINRVSKFDRKNYFYADLPQGYQISQLYHPIVGEGSLLIDVDGEEREIGIERIHVEQDAGKLMHDQHPDKSYVDLNRAGIALMEIVSKPDIRSPAEAGAYIRKLRAILRYVGSCDGNMEEGSMRADVNVSVRKAGEPFGTRCEIKNVNSVRFVQAAIEYEARRQIEVIEDGGEIIQETRLFDHDKGETRSLRSKEDAHDYRYFPDPDLLPLELPESFIDECRESLPELPDTKRQRYITQLNLTPYTASVITADHETAAWFEAMLEYFKAPDAKIATAAANWLTSDLFGALKKLGRDITDSPVSPKQGAELVGLVADGTLSGSLAKQVFEIMLESGQDPAVIVEERGLKQTSDTGAIEEVINKILADNQDKVEQYRSGKDKLFGFFVGQTMRAMGGKANPAVVNEILKKLLSA</sequence>
<dbReference type="EC" id="6.3.5.-" evidence="1"/>
<dbReference type="EMBL" id="AE008692">
    <property type="protein sequence ID" value="AAV89406.1"/>
    <property type="status" value="ALT_INIT"/>
    <property type="molecule type" value="Genomic_DNA"/>
</dbReference>
<dbReference type="RefSeq" id="WP_012817153.1">
    <property type="nucleotide sequence ID" value="NZ_CP035711.1"/>
</dbReference>
<dbReference type="SMR" id="Q5NPF4"/>
<dbReference type="STRING" id="264203.ZMO0782"/>
<dbReference type="GeneID" id="79904055"/>
<dbReference type="KEGG" id="zmo:ZMO0782"/>
<dbReference type="eggNOG" id="COG0064">
    <property type="taxonomic scope" value="Bacteria"/>
</dbReference>
<dbReference type="HOGENOM" id="CLU_019240_0_0_5"/>
<dbReference type="Proteomes" id="UP000001173">
    <property type="component" value="Chromosome"/>
</dbReference>
<dbReference type="GO" id="GO:0050566">
    <property type="term" value="F:asparaginyl-tRNA synthase (glutamine-hydrolyzing) activity"/>
    <property type="evidence" value="ECO:0007669"/>
    <property type="project" value="RHEA"/>
</dbReference>
<dbReference type="GO" id="GO:0005524">
    <property type="term" value="F:ATP binding"/>
    <property type="evidence" value="ECO:0007669"/>
    <property type="project" value="UniProtKB-KW"/>
</dbReference>
<dbReference type="GO" id="GO:0050567">
    <property type="term" value="F:glutaminyl-tRNA synthase (glutamine-hydrolyzing) activity"/>
    <property type="evidence" value="ECO:0007669"/>
    <property type="project" value="UniProtKB-UniRule"/>
</dbReference>
<dbReference type="GO" id="GO:0070681">
    <property type="term" value="P:glutaminyl-tRNAGln biosynthesis via transamidation"/>
    <property type="evidence" value="ECO:0007669"/>
    <property type="project" value="TreeGrafter"/>
</dbReference>
<dbReference type="GO" id="GO:0006412">
    <property type="term" value="P:translation"/>
    <property type="evidence" value="ECO:0007669"/>
    <property type="project" value="UniProtKB-UniRule"/>
</dbReference>
<dbReference type="FunFam" id="1.10.10.410:FF:000001">
    <property type="entry name" value="Aspartyl/glutamyl-tRNA(Asn/Gln) amidotransferase subunit B"/>
    <property type="match status" value="1"/>
</dbReference>
<dbReference type="Gene3D" id="1.10.10.410">
    <property type="match status" value="1"/>
</dbReference>
<dbReference type="Gene3D" id="1.10.150.380">
    <property type="entry name" value="GatB domain, N-terminal subdomain"/>
    <property type="match status" value="1"/>
</dbReference>
<dbReference type="HAMAP" id="MF_00121">
    <property type="entry name" value="GatB"/>
    <property type="match status" value="1"/>
</dbReference>
<dbReference type="InterPro" id="IPR017959">
    <property type="entry name" value="Asn/Gln-tRNA_amidoTrfase_suB/E"/>
</dbReference>
<dbReference type="InterPro" id="IPR006075">
    <property type="entry name" value="Asn/Gln-tRNA_Trfase_suB/E_cat"/>
</dbReference>
<dbReference type="InterPro" id="IPR018027">
    <property type="entry name" value="Asn/Gln_amidotransferase"/>
</dbReference>
<dbReference type="InterPro" id="IPR003789">
    <property type="entry name" value="Asn/Gln_tRNA_amidoTrase-B-like"/>
</dbReference>
<dbReference type="InterPro" id="IPR004413">
    <property type="entry name" value="GatB"/>
</dbReference>
<dbReference type="InterPro" id="IPR042114">
    <property type="entry name" value="GatB_C_1"/>
</dbReference>
<dbReference type="InterPro" id="IPR023168">
    <property type="entry name" value="GatB_Yqey_C_2"/>
</dbReference>
<dbReference type="InterPro" id="IPR017958">
    <property type="entry name" value="Gln-tRNA_amidoTrfase_suB_CS"/>
</dbReference>
<dbReference type="InterPro" id="IPR014746">
    <property type="entry name" value="Gln_synth/guanido_kin_cat_dom"/>
</dbReference>
<dbReference type="NCBIfam" id="TIGR00133">
    <property type="entry name" value="gatB"/>
    <property type="match status" value="1"/>
</dbReference>
<dbReference type="NCBIfam" id="NF004012">
    <property type="entry name" value="PRK05477.1-2"/>
    <property type="match status" value="1"/>
</dbReference>
<dbReference type="NCBIfam" id="NF004014">
    <property type="entry name" value="PRK05477.1-4"/>
    <property type="match status" value="1"/>
</dbReference>
<dbReference type="NCBIfam" id="NF004015">
    <property type="entry name" value="PRK05477.1-5"/>
    <property type="match status" value="1"/>
</dbReference>
<dbReference type="PANTHER" id="PTHR11659">
    <property type="entry name" value="GLUTAMYL-TRNA GLN AMIDOTRANSFERASE SUBUNIT B MITOCHONDRIAL AND PROKARYOTIC PET112-RELATED"/>
    <property type="match status" value="1"/>
</dbReference>
<dbReference type="PANTHER" id="PTHR11659:SF0">
    <property type="entry name" value="GLUTAMYL-TRNA(GLN) AMIDOTRANSFERASE SUBUNIT B, MITOCHONDRIAL"/>
    <property type="match status" value="1"/>
</dbReference>
<dbReference type="Pfam" id="PF02934">
    <property type="entry name" value="GatB_N"/>
    <property type="match status" value="1"/>
</dbReference>
<dbReference type="Pfam" id="PF02637">
    <property type="entry name" value="GatB_Yqey"/>
    <property type="match status" value="1"/>
</dbReference>
<dbReference type="SMART" id="SM00845">
    <property type="entry name" value="GatB_Yqey"/>
    <property type="match status" value="1"/>
</dbReference>
<dbReference type="SUPFAM" id="SSF89095">
    <property type="entry name" value="GatB/YqeY motif"/>
    <property type="match status" value="1"/>
</dbReference>
<dbReference type="SUPFAM" id="SSF55931">
    <property type="entry name" value="Glutamine synthetase/guanido kinase"/>
    <property type="match status" value="1"/>
</dbReference>
<dbReference type="PROSITE" id="PS01234">
    <property type="entry name" value="GATB"/>
    <property type="match status" value="1"/>
</dbReference>
<keyword id="KW-0067">ATP-binding</keyword>
<keyword id="KW-0436">Ligase</keyword>
<keyword id="KW-0547">Nucleotide-binding</keyword>
<keyword id="KW-0648">Protein biosynthesis</keyword>
<keyword id="KW-1185">Reference proteome</keyword>
<comment type="function">
    <text evidence="1">Allows the formation of correctly charged Asn-tRNA(Asn) or Gln-tRNA(Gln) through the transamidation of misacylated Asp-tRNA(Asn) or Glu-tRNA(Gln) in organisms which lack either or both of asparaginyl-tRNA or glutaminyl-tRNA synthetases. The reaction takes place in the presence of glutamine and ATP through an activated phospho-Asp-tRNA(Asn) or phospho-Glu-tRNA(Gln).</text>
</comment>
<comment type="catalytic activity">
    <reaction evidence="1">
        <text>L-glutamyl-tRNA(Gln) + L-glutamine + ATP + H2O = L-glutaminyl-tRNA(Gln) + L-glutamate + ADP + phosphate + H(+)</text>
        <dbReference type="Rhea" id="RHEA:17521"/>
        <dbReference type="Rhea" id="RHEA-COMP:9681"/>
        <dbReference type="Rhea" id="RHEA-COMP:9684"/>
        <dbReference type="ChEBI" id="CHEBI:15377"/>
        <dbReference type="ChEBI" id="CHEBI:15378"/>
        <dbReference type="ChEBI" id="CHEBI:29985"/>
        <dbReference type="ChEBI" id="CHEBI:30616"/>
        <dbReference type="ChEBI" id="CHEBI:43474"/>
        <dbReference type="ChEBI" id="CHEBI:58359"/>
        <dbReference type="ChEBI" id="CHEBI:78520"/>
        <dbReference type="ChEBI" id="CHEBI:78521"/>
        <dbReference type="ChEBI" id="CHEBI:456216"/>
    </reaction>
</comment>
<comment type="catalytic activity">
    <reaction evidence="1">
        <text>L-aspartyl-tRNA(Asn) + L-glutamine + ATP + H2O = L-asparaginyl-tRNA(Asn) + L-glutamate + ADP + phosphate + 2 H(+)</text>
        <dbReference type="Rhea" id="RHEA:14513"/>
        <dbReference type="Rhea" id="RHEA-COMP:9674"/>
        <dbReference type="Rhea" id="RHEA-COMP:9677"/>
        <dbReference type="ChEBI" id="CHEBI:15377"/>
        <dbReference type="ChEBI" id="CHEBI:15378"/>
        <dbReference type="ChEBI" id="CHEBI:29985"/>
        <dbReference type="ChEBI" id="CHEBI:30616"/>
        <dbReference type="ChEBI" id="CHEBI:43474"/>
        <dbReference type="ChEBI" id="CHEBI:58359"/>
        <dbReference type="ChEBI" id="CHEBI:78515"/>
        <dbReference type="ChEBI" id="CHEBI:78516"/>
        <dbReference type="ChEBI" id="CHEBI:456216"/>
    </reaction>
</comment>
<comment type="subunit">
    <text evidence="1">Heterotrimer of A, B and C subunits.</text>
</comment>
<comment type="similarity">
    <text evidence="1">Belongs to the GatB/GatE family. GatB subfamily.</text>
</comment>
<comment type="sequence caution" evidence="2">
    <conflict type="erroneous initiation">
        <sequence resource="EMBL-CDS" id="AAV89406"/>
    </conflict>
</comment>
<gene>
    <name evidence="1" type="primary">gatB</name>
    <name type="ordered locus">ZMO0782</name>
</gene>
<feature type="chain" id="PRO_0000241299" description="Aspartyl/glutamyl-tRNA(Asn/Gln) amidotransferase subunit B">
    <location>
        <begin position="1"/>
        <end position="490"/>
    </location>
</feature>